<dbReference type="EC" id="6.3.4.20" evidence="1"/>
<dbReference type="EMBL" id="CP001598">
    <property type="protein sequence ID" value="ACQ49289.1"/>
    <property type="molecule type" value="Genomic_DNA"/>
</dbReference>
<dbReference type="RefSeq" id="WP_000711603.1">
    <property type="nucleotide sequence ID" value="NC_012659.1"/>
</dbReference>
<dbReference type="SMR" id="C3P4F6"/>
<dbReference type="GeneID" id="45021343"/>
<dbReference type="KEGG" id="bai:BAA_1427"/>
<dbReference type="HOGENOM" id="CLU_081854_0_0_9"/>
<dbReference type="UniPathway" id="UPA00391"/>
<dbReference type="GO" id="GO:0005524">
    <property type="term" value="F:ATP binding"/>
    <property type="evidence" value="ECO:0007669"/>
    <property type="project" value="UniProtKB-UniRule"/>
</dbReference>
<dbReference type="GO" id="GO:0016879">
    <property type="term" value="F:ligase activity, forming carbon-nitrogen bonds"/>
    <property type="evidence" value="ECO:0007669"/>
    <property type="project" value="UniProtKB-UniRule"/>
</dbReference>
<dbReference type="GO" id="GO:0008270">
    <property type="term" value="F:zinc ion binding"/>
    <property type="evidence" value="ECO:0007669"/>
    <property type="project" value="UniProtKB-UniRule"/>
</dbReference>
<dbReference type="GO" id="GO:0008616">
    <property type="term" value="P:queuosine biosynthetic process"/>
    <property type="evidence" value="ECO:0007669"/>
    <property type="project" value="UniProtKB-UniRule"/>
</dbReference>
<dbReference type="CDD" id="cd01995">
    <property type="entry name" value="QueC-like"/>
    <property type="match status" value="1"/>
</dbReference>
<dbReference type="FunFam" id="3.40.50.620:FF:000017">
    <property type="entry name" value="7-cyano-7-deazaguanine synthase"/>
    <property type="match status" value="1"/>
</dbReference>
<dbReference type="Gene3D" id="3.40.50.620">
    <property type="entry name" value="HUPs"/>
    <property type="match status" value="1"/>
</dbReference>
<dbReference type="HAMAP" id="MF_01633">
    <property type="entry name" value="QueC"/>
    <property type="match status" value="1"/>
</dbReference>
<dbReference type="InterPro" id="IPR018317">
    <property type="entry name" value="QueC"/>
</dbReference>
<dbReference type="InterPro" id="IPR014729">
    <property type="entry name" value="Rossmann-like_a/b/a_fold"/>
</dbReference>
<dbReference type="NCBIfam" id="TIGR00364">
    <property type="entry name" value="7-cyano-7-deazaguanine synthase QueC"/>
    <property type="match status" value="1"/>
</dbReference>
<dbReference type="PANTHER" id="PTHR42914">
    <property type="entry name" value="7-CYANO-7-DEAZAGUANINE SYNTHASE"/>
    <property type="match status" value="1"/>
</dbReference>
<dbReference type="PANTHER" id="PTHR42914:SF1">
    <property type="entry name" value="7-CYANO-7-DEAZAGUANINE SYNTHASE"/>
    <property type="match status" value="1"/>
</dbReference>
<dbReference type="Pfam" id="PF06508">
    <property type="entry name" value="QueC"/>
    <property type="match status" value="1"/>
</dbReference>
<dbReference type="PIRSF" id="PIRSF006293">
    <property type="entry name" value="ExsB"/>
    <property type="match status" value="1"/>
</dbReference>
<dbReference type="SUPFAM" id="SSF52402">
    <property type="entry name" value="Adenine nucleotide alpha hydrolases-like"/>
    <property type="match status" value="1"/>
</dbReference>
<protein>
    <recommendedName>
        <fullName evidence="1">7-cyano-7-deazaguanine synthase</fullName>
        <ecNumber evidence="1">6.3.4.20</ecNumber>
    </recommendedName>
    <alternativeName>
        <fullName evidence="1">7-cyano-7-carbaguanine synthase</fullName>
    </alternativeName>
    <alternativeName>
        <fullName evidence="1">PreQ(0) synthase</fullName>
    </alternativeName>
    <alternativeName>
        <fullName evidence="1">Queuosine biosynthesis protein QueC</fullName>
    </alternativeName>
</protein>
<organism>
    <name type="scientific">Bacillus anthracis (strain A0248)</name>
    <dbReference type="NCBI Taxonomy" id="592021"/>
    <lineage>
        <taxon>Bacteria</taxon>
        <taxon>Bacillati</taxon>
        <taxon>Bacillota</taxon>
        <taxon>Bacilli</taxon>
        <taxon>Bacillales</taxon>
        <taxon>Bacillaceae</taxon>
        <taxon>Bacillus</taxon>
        <taxon>Bacillus cereus group</taxon>
    </lineage>
</organism>
<sequence>MKKEKAVVVFSGGQDSTTCLFWAIEQFAEVEAVTFNYNQRHKLEIDCAVEIAKELGIKHTVLDMSLLNQLAPNALTRTDMEITHEEGELPSTFVDGRNLLFLSFAAVLAKQVGARHIVTGVCETDFSGYPDCRDVFVKSLNVTLNLSMDYPFVIHTPLMWIDKAETWKLSDELGAFEFVREKTLTCYNGIIGDGCGECPACQLRKAGLDTYLQEREGASN</sequence>
<keyword id="KW-0067">ATP-binding</keyword>
<keyword id="KW-0436">Ligase</keyword>
<keyword id="KW-0479">Metal-binding</keyword>
<keyword id="KW-0547">Nucleotide-binding</keyword>
<keyword id="KW-0671">Queuosine biosynthesis</keyword>
<keyword id="KW-0862">Zinc</keyword>
<name>QUEC_BACAA</name>
<feature type="chain" id="PRO_1000186553" description="7-cyano-7-deazaguanine synthase">
    <location>
        <begin position="1"/>
        <end position="220"/>
    </location>
</feature>
<feature type="binding site" evidence="1">
    <location>
        <begin position="10"/>
        <end position="20"/>
    </location>
    <ligand>
        <name>ATP</name>
        <dbReference type="ChEBI" id="CHEBI:30616"/>
    </ligand>
</feature>
<feature type="binding site" evidence="1">
    <location>
        <position position="186"/>
    </location>
    <ligand>
        <name>Zn(2+)</name>
        <dbReference type="ChEBI" id="CHEBI:29105"/>
    </ligand>
</feature>
<feature type="binding site" evidence="1">
    <location>
        <position position="195"/>
    </location>
    <ligand>
        <name>Zn(2+)</name>
        <dbReference type="ChEBI" id="CHEBI:29105"/>
    </ligand>
</feature>
<feature type="binding site" evidence="1">
    <location>
        <position position="198"/>
    </location>
    <ligand>
        <name>Zn(2+)</name>
        <dbReference type="ChEBI" id="CHEBI:29105"/>
    </ligand>
</feature>
<feature type="binding site" evidence="1">
    <location>
        <position position="201"/>
    </location>
    <ligand>
        <name>Zn(2+)</name>
        <dbReference type="ChEBI" id="CHEBI:29105"/>
    </ligand>
</feature>
<reference key="1">
    <citation type="submission" date="2009-04" db="EMBL/GenBank/DDBJ databases">
        <title>Genome sequence of Bacillus anthracis A0248.</title>
        <authorList>
            <person name="Dodson R.J."/>
            <person name="Munk A.C."/>
            <person name="Bruce D."/>
            <person name="Detter C."/>
            <person name="Tapia R."/>
            <person name="Sutton G."/>
            <person name="Sims D."/>
            <person name="Brettin T."/>
        </authorList>
    </citation>
    <scope>NUCLEOTIDE SEQUENCE [LARGE SCALE GENOMIC DNA]</scope>
    <source>
        <strain>A0248</strain>
    </source>
</reference>
<gene>
    <name evidence="1" type="primary">queC</name>
    <name type="ordered locus">BAA_1427</name>
</gene>
<proteinExistence type="inferred from homology"/>
<evidence type="ECO:0000255" key="1">
    <source>
        <dbReference type="HAMAP-Rule" id="MF_01633"/>
    </source>
</evidence>
<comment type="function">
    <text evidence="1">Catalyzes the ATP-dependent conversion of 7-carboxy-7-deazaguanine (CDG) to 7-cyano-7-deazaguanine (preQ(0)).</text>
</comment>
<comment type="catalytic activity">
    <reaction evidence="1">
        <text>7-carboxy-7-deazaguanine + NH4(+) + ATP = 7-cyano-7-deazaguanine + ADP + phosphate + H2O + H(+)</text>
        <dbReference type="Rhea" id="RHEA:27982"/>
        <dbReference type="ChEBI" id="CHEBI:15377"/>
        <dbReference type="ChEBI" id="CHEBI:15378"/>
        <dbReference type="ChEBI" id="CHEBI:28938"/>
        <dbReference type="ChEBI" id="CHEBI:30616"/>
        <dbReference type="ChEBI" id="CHEBI:43474"/>
        <dbReference type="ChEBI" id="CHEBI:45075"/>
        <dbReference type="ChEBI" id="CHEBI:61036"/>
        <dbReference type="ChEBI" id="CHEBI:456216"/>
        <dbReference type="EC" id="6.3.4.20"/>
    </reaction>
</comment>
<comment type="cofactor">
    <cofactor evidence="1">
        <name>Zn(2+)</name>
        <dbReference type="ChEBI" id="CHEBI:29105"/>
    </cofactor>
    <text evidence="1">Binds 1 zinc ion per subunit.</text>
</comment>
<comment type="pathway">
    <text evidence="1">Purine metabolism; 7-cyano-7-deazaguanine biosynthesis.</text>
</comment>
<comment type="subunit">
    <text evidence="1">Homodimer.</text>
</comment>
<comment type="similarity">
    <text evidence="1">Belongs to the QueC family.</text>
</comment>
<accession>C3P4F6</accession>